<reference key="1">
    <citation type="journal article" date="1992" name="FEMS Microbiol. Lett.">
        <title>Identification of the cellulose-binding domain of the cellulosome subunit S1 from Clostridium thermocellum YS.</title>
        <authorList>
            <person name="Poole D.M."/>
            <person name="Morag E."/>
            <person name="Lamed R."/>
            <person name="Bayer E.A."/>
            <person name="Hazlewood G.P."/>
            <person name="Gilbert H.J."/>
        </authorList>
    </citation>
    <scope>NUCLEOTIDE SEQUENCE [GENOMIC DNA]</scope>
    <source>
        <strain>YS</strain>
    </source>
</reference>
<name>CIPB_ACETH</name>
<protein>
    <recommendedName>
        <fullName>Cellulosomal-scaffolding protein B</fullName>
    </recommendedName>
    <alternativeName>
        <fullName>Cellulose-integrating protein B</fullName>
    </alternativeName>
    <alternativeName>
        <fullName>Cellulosomal glycoprotein S1/SL</fullName>
    </alternativeName>
</protein>
<evidence type="ECO:0000250" key="1"/>
<evidence type="ECO:0000255" key="2">
    <source>
        <dbReference type="PROSITE-ProRule" id="PRU00513"/>
    </source>
</evidence>
<evidence type="ECO:0000255" key="3">
    <source>
        <dbReference type="PROSITE-ProRule" id="PRU01102"/>
    </source>
</evidence>
<evidence type="ECO:0000256" key="4">
    <source>
        <dbReference type="SAM" id="MobiDB-lite"/>
    </source>
</evidence>
<proteinExistence type="evidence at protein level"/>
<sequence>DPSKSFDSAIYPDRKMIVFLFAEDSGRGTYAITQDGVFATIVATVKSAAAAPITLLEVGAFRDNDLVEISTTFVAGGVNLGSSVPTTQPNVPSDGVVVEIGKVTGSVGTTVEIPVYFRGVPSKGIANCDFVFRYDPNVLEIIGIDPRSIIVDPNPTKSFDTAIYADRKIIVFLFCGRQRNRSVSITKDGVFAKIRATVKSSAPAYITFDEVGGFADNDLVEQKVSFIDGGVNVGNATPTKGATPTNTATPTKSATATPPGHSVPTNTPTNTPANTPVSGNLKVEFYNSNPSDTTNSINPQFKVTNTGSSAIDLSKLTLRYYYTVDGQKDQTFWCDHAAIIGSNGSYNGITSNVKGTFVKMSSSTNNADTYLEISFTGGTLEPGAHVQIQGRFAKNDWSNYTQSNDYSFKSRSQFVEWDQVTAYLNGVLVWGKEPGGSVVPSTQPVTTPPATTKPPATTIPPSDDPNAIKIKVDTVNAKPGDTVNIPVRFSGIPSKGIANCDFVYSYDPNVLEIIEIKPGELIVDPNPDKSFDTAVYPDRKMIVFLFAEDSGTGAYAITEDGVFATIVAKVKEGAPEGFSAIEISEFGAFADNDLVEVETDLINGGVLVTNKPVIEGYKVSGYILPDFSFDATVAPLVKAGFKVEIVGTELYAVTDANGYFEITGVPANASGYTLKISRATYLDRVIANVVVTGDTSVSTSQAPIMMWVGDIVKDNSINLLDVAEVIRCFNATKGSANYVEELDINRNGAINMQDIMIVHKHFGATSSDYDAQ</sequence>
<comment type="function">
    <text>Acts as a scaffolding protein in the cellulosome. It promotes binding of cellulose to the catalytic domains of the cellulolytic enzymes probably through the binding of the nine repeated domains with dockerin domains present in catalytic subunits of the cellulosome.</text>
</comment>
<comment type="subcellular location">
    <subcellularLocation>
        <location>Secreted</location>
    </subcellularLocation>
    <text>Remains at cell surface.</text>
</comment>
<comment type="domain">
    <text>The cohesin domains bind to the dockerin domain born by the catalytic components of the cellulosome.</text>
</comment>
<comment type="PTM">
    <text evidence="1">O-glycosylated on most but not all Thr residues of the linker units.</text>
</comment>
<organism>
    <name type="scientific">Acetivibrio thermocellus</name>
    <name type="common">Hungateiclostridium thermocellum</name>
    <name type="synonym">Clostridium thermocellum</name>
    <dbReference type="NCBI Taxonomy" id="1515"/>
    <lineage>
        <taxon>Bacteria</taxon>
        <taxon>Bacillati</taxon>
        <taxon>Bacillota</taxon>
        <taxon>Clostridia</taxon>
        <taxon>Eubacteriales</taxon>
        <taxon>Oscillospiraceae</taxon>
        <taxon>Acetivibrio</taxon>
    </lineage>
</organism>
<feature type="chain" id="PRO_0000089767" description="Cellulosomal-scaffolding protein B">
    <location>
        <begin position="1" status="less than"/>
        <end position="772"/>
    </location>
</feature>
<feature type="domain" description="Cohesin 1">
    <location>
        <begin position="1" status="less than"/>
        <end position="80"/>
    </location>
</feature>
<feature type="domain" description="Cohesin 2">
    <location>
        <begin position="94"/>
        <end position="240"/>
    </location>
</feature>
<feature type="domain" description="CBM3" evidence="2">
    <location>
        <begin position="277"/>
        <end position="435"/>
    </location>
</feature>
<feature type="domain" description="Cohesin 3">
    <location>
        <begin position="462"/>
        <end position="607"/>
    </location>
</feature>
<feature type="domain" description="Dockerin" evidence="3">
    <location>
        <begin position="704"/>
        <end position="771"/>
    </location>
</feature>
<feature type="region of interest" description="Linker (Pro/Thr-rich)">
    <location>
        <begin position="81"/>
        <end position="93"/>
    </location>
</feature>
<feature type="region of interest" description="Disordered" evidence="4">
    <location>
        <begin position="235"/>
        <end position="277"/>
    </location>
</feature>
<feature type="region of interest" description="Linker (Pro/Thr-rich)">
    <location>
        <begin position="241"/>
        <end position="272"/>
    </location>
</feature>
<feature type="region of interest" description="Disordered" evidence="4">
    <location>
        <begin position="438"/>
        <end position="464"/>
    </location>
</feature>
<feature type="region of interest" description="Linker (Pro/Thr-rich)">
    <location>
        <begin position="440"/>
        <end position="461"/>
    </location>
</feature>
<feature type="compositionally biased region" description="Low complexity" evidence="4">
    <location>
        <begin position="235"/>
        <end position="276"/>
    </location>
</feature>
<feature type="compositionally biased region" description="Low complexity" evidence="4">
    <location>
        <begin position="438"/>
        <end position="461"/>
    </location>
</feature>
<feature type="non-terminal residue">
    <location>
        <position position="1"/>
    </location>
</feature>
<gene>
    <name type="primary">cipB</name>
</gene>
<accession>Q01866</accession>
<dbReference type="EMBL" id="X68233">
    <property type="protein sequence ID" value="CAA48312.1"/>
    <property type="molecule type" value="Genomic_DNA"/>
</dbReference>
<dbReference type="PDB" id="2B59">
    <property type="method" value="X-ray"/>
    <property type="resolution" value="2.11 A"/>
    <property type="chains" value="B=-"/>
</dbReference>
<dbReference type="PDBsum" id="2B59"/>
<dbReference type="SMR" id="Q01866"/>
<dbReference type="CAZy" id="CBM3">
    <property type="family name" value="Carbohydrate-Binding Module Family 3"/>
</dbReference>
<dbReference type="GO" id="GO:0005576">
    <property type="term" value="C:extracellular region"/>
    <property type="evidence" value="ECO:0007669"/>
    <property type="project" value="UniProtKB-SubCell"/>
</dbReference>
<dbReference type="GO" id="GO:0030248">
    <property type="term" value="F:cellulose binding"/>
    <property type="evidence" value="ECO:0007669"/>
    <property type="project" value="InterPro"/>
</dbReference>
<dbReference type="GO" id="GO:0004553">
    <property type="term" value="F:hydrolase activity, hydrolyzing O-glycosyl compounds"/>
    <property type="evidence" value="ECO:0007669"/>
    <property type="project" value="InterPro"/>
</dbReference>
<dbReference type="GO" id="GO:0071555">
    <property type="term" value="P:cell wall organization"/>
    <property type="evidence" value="ECO:0007669"/>
    <property type="project" value="UniProtKB-KW"/>
</dbReference>
<dbReference type="GO" id="GO:0030245">
    <property type="term" value="P:cellulose catabolic process"/>
    <property type="evidence" value="ECO:0007669"/>
    <property type="project" value="UniProtKB-KW"/>
</dbReference>
<dbReference type="CDD" id="cd14253">
    <property type="entry name" value="Dockerin"/>
    <property type="match status" value="1"/>
</dbReference>
<dbReference type="CDD" id="cd08548">
    <property type="entry name" value="Type_I_cohesin_like"/>
    <property type="match status" value="3"/>
</dbReference>
<dbReference type="Gene3D" id="2.60.40.4130">
    <property type="match status" value="1"/>
</dbReference>
<dbReference type="Gene3D" id="2.60.40.680">
    <property type="match status" value="3"/>
</dbReference>
<dbReference type="Gene3D" id="2.60.40.710">
    <property type="entry name" value="Endoglucanase-like"/>
    <property type="match status" value="1"/>
</dbReference>
<dbReference type="InterPro" id="IPR008969">
    <property type="entry name" value="CarboxyPept-like_regulatory"/>
</dbReference>
<dbReference type="InterPro" id="IPR008965">
    <property type="entry name" value="CBM2/CBM3_carb-bd_dom_sf"/>
</dbReference>
<dbReference type="InterPro" id="IPR001956">
    <property type="entry name" value="CBM3"/>
</dbReference>
<dbReference type="InterPro" id="IPR036966">
    <property type="entry name" value="CBM3_sf"/>
</dbReference>
<dbReference type="InterPro" id="IPR002102">
    <property type="entry name" value="Cohesin_dom"/>
</dbReference>
<dbReference type="InterPro" id="IPR002105">
    <property type="entry name" value="Dockerin_1_rpt"/>
</dbReference>
<dbReference type="InterPro" id="IPR016134">
    <property type="entry name" value="Dockerin_dom"/>
</dbReference>
<dbReference type="InterPro" id="IPR036439">
    <property type="entry name" value="Dockerin_dom_sf"/>
</dbReference>
<dbReference type="InterPro" id="IPR018247">
    <property type="entry name" value="EF_Hand_1_Ca_BS"/>
</dbReference>
<dbReference type="Pfam" id="PF00942">
    <property type="entry name" value="CBM_3"/>
    <property type="match status" value="1"/>
</dbReference>
<dbReference type="Pfam" id="PF00963">
    <property type="entry name" value="Cohesin"/>
    <property type="match status" value="3"/>
</dbReference>
<dbReference type="Pfam" id="PF00404">
    <property type="entry name" value="Dockerin_1"/>
    <property type="match status" value="1"/>
</dbReference>
<dbReference type="SMART" id="SM01067">
    <property type="entry name" value="CBM_3"/>
    <property type="match status" value="1"/>
</dbReference>
<dbReference type="SUPFAM" id="SSF49384">
    <property type="entry name" value="Carbohydrate-binding domain"/>
    <property type="match status" value="4"/>
</dbReference>
<dbReference type="SUPFAM" id="SSF49464">
    <property type="entry name" value="Carboxypeptidase regulatory domain-like"/>
    <property type="match status" value="1"/>
</dbReference>
<dbReference type="SUPFAM" id="SSF63446">
    <property type="entry name" value="Type I dockerin domain"/>
    <property type="match status" value="1"/>
</dbReference>
<dbReference type="PROSITE" id="PS51172">
    <property type="entry name" value="CBM3"/>
    <property type="match status" value="1"/>
</dbReference>
<dbReference type="PROSITE" id="PS00448">
    <property type="entry name" value="CLOS_CELLULOSOME_RPT"/>
    <property type="match status" value="2"/>
</dbReference>
<dbReference type="PROSITE" id="PS51766">
    <property type="entry name" value="DOCKERIN"/>
    <property type="match status" value="1"/>
</dbReference>
<dbReference type="PROSITE" id="PS00018">
    <property type="entry name" value="EF_HAND_1"/>
    <property type="match status" value="1"/>
</dbReference>
<keyword id="KW-0002">3D-structure</keyword>
<keyword id="KW-0119">Carbohydrate metabolism</keyword>
<keyword id="KW-0961">Cell wall biogenesis/degradation</keyword>
<keyword id="KW-0136">Cellulose degradation</keyword>
<keyword id="KW-0325">Glycoprotein</keyword>
<keyword id="KW-0624">Polysaccharide degradation</keyword>
<keyword id="KW-0677">Repeat</keyword>
<keyword id="KW-0964">Secreted</keyword>